<comment type="function">
    <text evidence="1">Could be involved in insertion of integral membrane proteins into the membrane.</text>
</comment>
<comment type="subcellular location">
    <subcellularLocation>
        <location evidence="1">Cell inner membrane</location>
        <topology evidence="1">Peripheral membrane protein</topology>
        <orientation evidence="1">Cytoplasmic side</orientation>
    </subcellularLocation>
</comment>
<comment type="similarity">
    <text evidence="1">Belongs to the UPF0161 family.</text>
</comment>
<proteinExistence type="inferred from homology"/>
<feature type="chain" id="PRO_1000013127" description="Putative membrane protein insertion efficiency factor">
    <location>
        <begin position="1"/>
        <end position="84"/>
    </location>
</feature>
<keyword id="KW-0997">Cell inner membrane</keyword>
<keyword id="KW-1003">Cell membrane</keyword>
<keyword id="KW-0472">Membrane</keyword>
<keyword id="KW-1185">Reference proteome</keyword>
<name>YIDD_SHELP</name>
<organism>
    <name type="scientific">Shewanella loihica (strain ATCC BAA-1088 / PV-4)</name>
    <dbReference type="NCBI Taxonomy" id="323850"/>
    <lineage>
        <taxon>Bacteria</taxon>
        <taxon>Pseudomonadati</taxon>
        <taxon>Pseudomonadota</taxon>
        <taxon>Gammaproteobacteria</taxon>
        <taxon>Alteromonadales</taxon>
        <taxon>Shewanellaceae</taxon>
        <taxon>Shewanella</taxon>
    </lineage>
</organism>
<evidence type="ECO:0000255" key="1">
    <source>
        <dbReference type="HAMAP-Rule" id="MF_00386"/>
    </source>
</evidence>
<accession>A3QJT2</accession>
<sequence>MAQAQSPLQWLATKLIRGYQIFISPILGPKCRFHPTCSNYALEAIRLHGFVKGSWFAGKRVLKCHPLHPGGEDPVPPKNNRCNK</sequence>
<dbReference type="EMBL" id="CP000606">
    <property type="protein sequence ID" value="ABO25730.1"/>
    <property type="molecule type" value="Genomic_DNA"/>
</dbReference>
<dbReference type="STRING" id="323850.Shew_3867"/>
<dbReference type="KEGG" id="slo:Shew_3867"/>
<dbReference type="eggNOG" id="COG0759">
    <property type="taxonomic scope" value="Bacteria"/>
</dbReference>
<dbReference type="HOGENOM" id="CLU_144811_5_2_6"/>
<dbReference type="OrthoDB" id="9801753at2"/>
<dbReference type="Proteomes" id="UP000001558">
    <property type="component" value="Chromosome"/>
</dbReference>
<dbReference type="GO" id="GO:0005886">
    <property type="term" value="C:plasma membrane"/>
    <property type="evidence" value="ECO:0007669"/>
    <property type="project" value="UniProtKB-SubCell"/>
</dbReference>
<dbReference type="HAMAP" id="MF_00386">
    <property type="entry name" value="UPF0161_YidD"/>
    <property type="match status" value="1"/>
</dbReference>
<dbReference type="InterPro" id="IPR002696">
    <property type="entry name" value="Membr_insert_effic_factor_YidD"/>
</dbReference>
<dbReference type="NCBIfam" id="TIGR00278">
    <property type="entry name" value="membrane protein insertion efficiency factor YidD"/>
    <property type="match status" value="1"/>
</dbReference>
<dbReference type="PANTHER" id="PTHR33383">
    <property type="entry name" value="MEMBRANE PROTEIN INSERTION EFFICIENCY FACTOR-RELATED"/>
    <property type="match status" value="1"/>
</dbReference>
<dbReference type="PANTHER" id="PTHR33383:SF1">
    <property type="entry name" value="MEMBRANE PROTEIN INSERTION EFFICIENCY FACTOR-RELATED"/>
    <property type="match status" value="1"/>
</dbReference>
<dbReference type="Pfam" id="PF01809">
    <property type="entry name" value="YidD"/>
    <property type="match status" value="1"/>
</dbReference>
<dbReference type="SMART" id="SM01234">
    <property type="entry name" value="Haemolytic"/>
    <property type="match status" value="1"/>
</dbReference>
<protein>
    <recommendedName>
        <fullName evidence="1">Putative membrane protein insertion efficiency factor</fullName>
    </recommendedName>
</protein>
<reference key="1">
    <citation type="submission" date="2007-03" db="EMBL/GenBank/DDBJ databases">
        <title>Complete sequence of Shewanella loihica PV-4.</title>
        <authorList>
            <consortium name="US DOE Joint Genome Institute"/>
            <person name="Copeland A."/>
            <person name="Lucas S."/>
            <person name="Lapidus A."/>
            <person name="Barry K."/>
            <person name="Detter J.C."/>
            <person name="Glavina del Rio T."/>
            <person name="Hammon N."/>
            <person name="Israni S."/>
            <person name="Dalin E."/>
            <person name="Tice H."/>
            <person name="Pitluck S."/>
            <person name="Chain P."/>
            <person name="Malfatti S."/>
            <person name="Shin M."/>
            <person name="Vergez L."/>
            <person name="Schmutz J."/>
            <person name="Larimer F."/>
            <person name="Land M."/>
            <person name="Hauser L."/>
            <person name="Kyrpides N."/>
            <person name="Mikhailova N."/>
            <person name="Romine M.F."/>
            <person name="Serres G."/>
            <person name="Fredrickson J."/>
            <person name="Tiedje J."/>
            <person name="Richardson P."/>
        </authorList>
    </citation>
    <scope>NUCLEOTIDE SEQUENCE [LARGE SCALE GENOMIC DNA]</scope>
    <source>
        <strain>ATCC BAA-1088 / PV-4</strain>
    </source>
</reference>
<gene>
    <name type="ordered locus">Shew_3867</name>
</gene>